<gene>
    <name evidence="1" type="primary">ihfB</name>
    <name evidence="1" type="synonym">himD</name>
    <name type="ordered locus">RHECIAT_CH0000441</name>
</gene>
<keyword id="KW-0233">DNA recombination</keyword>
<keyword id="KW-0238">DNA-binding</keyword>
<keyword id="KW-0804">Transcription</keyword>
<keyword id="KW-0805">Transcription regulation</keyword>
<keyword id="KW-0810">Translation regulation</keyword>
<reference key="1">
    <citation type="journal article" date="2010" name="Appl. Environ. Microbiol.">
        <title>Conserved symbiotic plasmid DNA sequences in the multireplicon pangenomic structure of Rhizobium etli.</title>
        <authorList>
            <person name="Gonzalez V."/>
            <person name="Acosta J.L."/>
            <person name="Santamaria R.I."/>
            <person name="Bustos P."/>
            <person name="Fernandez J.L."/>
            <person name="Hernandez Gonzalez I.L."/>
            <person name="Diaz R."/>
            <person name="Flores M."/>
            <person name="Palacios R."/>
            <person name="Mora J."/>
            <person name="Davila G."/>
        </authorList>
    </citation>
    <scope>NUCLEOTIDE SEQUENCE [LARGE SCALE GENOMIC DNA]</scope>
    <source>
        <strain>CIAT 652</strain>
    </source>
</reference>
<dbReference type="EMBL" id="CP001074">
    <property type="protein sequence ID" value="ACE89435.1"/>
    <property type="molecule type" value="Genomic_DNA"/>
</dbReference>
<dbReference type="SMR" id="B3PZE1"/>
<dbReference type="KEGG" id="rec:RHECIAT_CH0000441"/>
<dbReference type="eggNOG" id="COG0776">
    <property type="taxonomic scope" value="Bacteria"/>
</dbReference>
<dbReference type="HOGENOM" id="CLU_105066_2_0_5"/>
<dbReference type="Proteomes" id="UP000008817">
    <property type="component" value="Chromosome"/>
</dbReference>
<dbReference type="GO" id="GO:0005694">
    <property type="term" value="C:chromosome"/>
    <property type="evidence" value="ECO:0007669"/>
    <property type="project" value="InterPro"/>
</dbReference>
<dbReference type="GO" id="GO:0005829">
    <property type="term" value="C:cytosol"/>
    <property type="evidence" value="ECO:0007669"/>
    <property type="project" value="TreeGrafter"/>
</dbReference>
<dbReference type="GO" id="GO:0003677">
    <property type="term" value="F:DNA binding"/>
    <property type="evidence" value="ECO:0007669"/>
    <property type="project" value="UniProtKB-UniRule"/>
</dbReference>
<dbReference type="GO" id="GO:0030527">
    <property type="term" value="F:structural constituent of chromatin"/>
    <property type="evidence" value="ECO:0007669"/>
    <property type="project" value="InterPro"/>
</dbReference>
<dbReference type="GO" id="GO:0006310">
    <property type="term" value="P:DNA recombination"/>
    <property type="evidence" value="ECO:0007669"/>
    <property type="project" value="UniProtKB-UniRule"/>
</dbReference>
<dbReference type="GO" id="GO:0006355">
    <property type="term" value="P:regulation of DNA-templated transcription"/>
    <property type="evidence" value="ECO:0007669"/>
    <property type="project" value="UniProtKB-UniRule"/>
</dbReference>
<dbReference type="GO" id="GO:0006417">
    <property type="term" value="P:regulation of translation"/>
    <property type="evidence" value="ECO:0007669"/>
    <property type="project" value="UniProtKB-UniRule"/>
</dbReference>
<dbReference type="CDD" id="cd13836">
    <property type="entry name" value="IHF_B"/>
    <property type="match status" value="1"/>
</dbReference>
<dbReference type="Gene3D" id="4.10.520.10">
    <property type="entry name" value="IHF-like DNA-binding proteins"/>
    <property type="match status" value="1"/>
</dbReference>
<dbReference type="HAMAP" id="MF_00381">
    <property type="entry name" value="IHF_beta"/>
    <property type="match status" value="1"/>
</dbReference>
<dbReference type="InterPro" id="IPR000119">
    <property type="entry name" value="Hist_DNA-bd"/>
</dbReference>
<dbReference type="InterPro" id="IPR020816">
    <property type="entry name" value="Histone-like_DNA-bd_CS"/>
</dbReference>
<dbReference type="InterPro" id="IPR010992">
    <property type="entry name" value="IHF-like_DNA-bd_dom_sf"/>
</dbReference>
<dbReference type="InterPro" id="IPR005685">
    <property type="entry name" value="IHF_beta"/>
</dbReference>
<dbReference type="NCBIfam" id="TIGR00988">
    <property type="entry name" value="hip"/>
    <property type="match status" value="1"/>
</dbReference>
<dbReference type="NCBIfam" id="NF001222">
    <property type="entry name" value="PRK00199.1"/>
    <property type="match status" value="1"/>
</dbReference>
<dbReference type="PANTHER" id="PTHR33175">
    <property type="entry name" value="DNA-BINDING PROTEIN HU"/>
    <property type="match status" value="1"/>
</dbReference>
<dbReference type="PANTHER" id="PTHR33175:SF5">
    <property type="entry name" value="INTEGRATION HOST FACTOR SUBUNIT BETA"/>
    <property type="match status" value="1"/>
</dbReference>
<dbReference type="Pfam" id="PF00216">
    <property type="entry name" value="Bac_DNA_binding"/>
    <property type="match status" value="1"/>
</dbReference>
<dbReference type="PRINTS" id="PR01727">
    <property type="entry name" value="DNABINDINGHU"/>
</dbReference>
<dbReference type="SMART" id="SM00411">
    <property type="entry name" value="BHL"/>
    <property type="match status" value="1"/>
</dbReference>
<dbReference type="SUPFAM" id="SSF47729">
    <property type="entry name" value="IHF-like DNA-binding proteins"/>
    <property type="match status" value="1"/>
</dbReference>
<dbReference type="PROSITE" id="PS00045">
    <property type="entry name" value="HISTONE_LIKE"/>
    <property type="match status" value="1"/>
</dbReference>
<proteinExistence type="inferred from homology"/>
<comment type="function">
    <text evidence="1">This protein is one of the two subunits of integration host factor, a specific DNA-binding protein that functions in genetic recombination as well as in transcriptional and translational control.</text>
</comment>
<comment type="subunit">
    <text evidence="1">Heterodimer of an alpha and a beta chain.</text>
</comment>
<comment type="similarity">
    <text evidence="1">Belongs to the bacterial histone-like protein family.</text>
</comment>
<organism>
    <name type="scientific">Rhizobium etli (strain CIAT 652)</name>
    <dbReference type="NCBI Taxonomy" id="491916"/>
    <lineage>
        <taxon>Bacteria</taxon>
        <taxon>Pseudomonadati</taxon>
        <taxon>Pseudomonadota</taxon>
        <taxon>Alphaproteobacteria</taxon>
        <taxon>Hyphomicrobiales</taxon>
        <taxon>Rhizobiaceae</taxon>
        <taxon>Rhizobium/Agrobacterium group</taxon>
        <taxon>Rhizobium</taxon>
    </lineage>
</organism>
<feature type="chain" id="PRO_1000122230" description="Integration host factor subunit beta">
    <location>
        <begin position="1"/>
        <end position="99"/>
    </location>
</feature>
<accession>B3PZE1</accession>
<evidence type="ECO:0000255" key="1">
    <source>
        <dbReference type="HAMAP-Rule" id="MF_00381"/>
    </source>
</evidence>
<name>IHFB_RHIE6</name>
<protein>
    <recommendedName>
        <fullName evidence="1">Integration host factor subunit beta</fullName>
        <shortName evidence="1">IHF-beta</shortName>
    </recommendedName>
</protein>
<sequence length="99" mass="11191">MIKSELVQIVAARNPHLYHRDVENIVNAVLDEITDALAAGNRVELRGFGAFSVKNRPSRSGRNPRTGDTVFVEEKWVPFFKTGKELRERLNPGQADEED</sequence>